<name>SYE1_HELP2</name>
<accession>B6JL62</accession>
<sequence length="463" mass="53377">MSLIVTRFAPSPTGYLHIGGLRTAIFNYLFARANQGKFFLRIEDTDLSRNSIEAANAIIEAFKWVGLEYDGEILYQSKRFEIYKEYIQKLLDEDKAYYCYMSKYELDALREEQKARKETPRYDNRYRDFKGTPPKGIEPVVRIKVPQNEVIGFNDGVKGEVRVNTNELDDFIIARSDGVPTYNFVVTIDDALMGITDVIRGDDHLSNTPKQIVLYKALNFKIPNFFHVPMILNEEGQKLSKRHGATNVMDYQERGYLKEALVNFLARLGWSYQDKEIFSMQELLECFDPKDLNSSPSCFSWHKLNWLNAHYLKNQSTQELLKLLKPFSFSDLSHLNPAQLDRLLDALKERSQTLKELALKIDEVLTAPIEYEEKVLKKLNQALVMPLLEKFKLELNTTNFNDESALENAMHQIIEEEKIKAGSFMQPLRLALLGKGGGIGLKEALFILGKTESVKRIEKFLKN</sequence>
<protein>
    <recommendedName>
        <fullName evidence="1">Glutamate--tRNA ligase 1</fullName>
        <ecNumber evidence="1">6.1.1.17</ecNumber>
    </recommendedName>
    <alternativeName>
        <fullName evidence="1">Glutamyl-tRNA synthetase 1</fullName>
        <shortName evidence="1">GluRS 1</shortName>
    </alternativeName>
</protein>
<comment type="function">
    <text evidence="1">Catalyzes the attachment of glutamate to tRNA(Glu) in a two-step reaction: glutamate is first activated by ATP to form Glu-AMP and then transferred to the acceptor end of tRNA(Glu).</text>
</comment>
<comment type="catalytic activity">
    <reaction evidence="1">
        <text>tRNA(Glu) + L-glutamate + ATP = L-glutamyl-tRNA(Glu) + AMP + diphosphate</text>
        <dbReference type="Rhea" id="RHEA:23540"/>
        <dbReference type="Rhea" id="RHEA-COMP:9663"/>
        <dbReference type="Rhea" id="RHEA-COMP:9680"/>
        <dbReference type="ChEBI" id="CHEBI:29985"/>
        <dbReference type="ChEBI" id="CHEBI:30616"/>
        <dbReference type="ChEBI" id="CHEBI:33019"/>
        <dbReference type="ChEBI" id="CHEBI:78442"/>
        <dbReference type="ChEBI" id="CHEBI:78520"/>
        <dbReference type="ChEBI" id="CHEBI:456215"/>
        <dbReference type="EC" id="6.1.1.17"/>
    </reaction>
</comment>
<comment type="subunit">
    <text evidence="1">Monomer.</text>
</comment>
<comment type="subcellular location">
    <subcellularLocation>
        <location evidence="1">Cytoplasm</location>
    </subcellularLocation>
</comment>
<comment type="similarity">
    <text evidence="1">Belongs to the class-I aminoacyl-tRNA synthetase family. Glutamate--tRNA ligase type 1 subfamily.</text>
</comment>
<proteinExistence type="inferred from homology"/>
<dbReference type="EC" id="6.1.1.17" evidence="1"/>
<dbReference type="EMBL" id="CP001217">
    <property type="protein sequence ID" value="ACJ07640.1"/>
    <property type="molecule type" value="Genomic_DNA"/>
</dbReference>
<dbReference type="SMR" id="B6JL62"/>
<dbReference type="KEGG" id="hpp:HPP12_0486"/>
<dbReference type="HOGENOM" id="CLU_015768_6_3_7"/>
<dbReference type="Proteomes" id="UP000008198">
    <property type="component" value="Chromosome"/>
</dbReference>
<dbReference type="GO" id="GO:0005829">
    <property type="term" value="C:cytosol"/>
    <property type="evidence" value="ECO:0007669"/>
    <property type="project" value="TreeGrafter"/>
</dbReference>
<dbReference type="GO" id="GO:0005524">
    <property type="term" value="F:ATP binding"/>
    <property type="evidence" value="ECO:0007669"/>
    <property type="project" value="UniProtKB-UniRule"/>
</dbReference>
<dbReference type="GO" id="GO:0004818">
    <property type="term" value="F:glutamate-tRNA ligase activity"/>
    <property type="evidence" value="ECO:0007669"/>
    <property type="project" value="UniProtKB-UniRule"/>
</dbReference>
<dbReference type="GO" id="GO:0000049">
    <property type="term" value="F:tRNA binding"/>
    <property type="evidence" value="ECO:0007669"/>
    <property type="project" value="InterPro"/>
</dbReference>
<dbReference type="GO" id="GO:0008270">
    <property type="term" value="F:zinc ion binding"/>
    <property type="evidence" value="ECO:0007669"/>
    <property type="project" value="InterPro"/>
</dbReference>
<dbReference type="GO" id="GO:0006424">
    <property type="term" value="P:glutamyl-tRNA aminoacylation"/>
    <property type="evidence" value="ECO:0007669"/>
    <property type="project" value="UniProtKB-UniRule"/>
</dbReference>
<dbReference type="CDD" id="cd00808">
    <property type="entry name" value="GluRS_core"/>
    <property type="match status" value="1"/>
</dbReference>
<dbReference type="FunFam" id="3.40.50.620:FF:000288">
    <property type="entry name" value="Glutamate--tRNA ligase 1"/>
    <property type="match status" value="1"/>
</dbReference>
<dbReference type="Gene3D" id="1.10.10.350">
    <property type="match status" value="1"/>
</dbReference>
<dbReference type="Gene3D" id="3.40.50.620">
    <property type="entry name" value="HUPs"/>
    <property type="match status" value="1"/>
</dbReference>
<dbReference type="HAMAP" id="MF_00022">
    <property type="entry name" value="Glu_tRNA_synth_type1"/>
    <property type="match status" value="1"/>
</dbReference>
<dbReference type="InterPro" id="IPR045462">
    <property type="entry name" value="aa-tRNA-synth_I_cd-bd"/>
</dbReference>
<dbReference type="InterPro" id="IPR020751">
    <property type="entry name" value="aa-tRNA-synth_I_codon-bd_sub2"/>
</dbReference>
<dbReference type="InterPro" id="IPR001412">
    <property type="entry name" value="aa-tRNA-synth_I_CS"/>
</dbReference>
<dbReference type="InterPro" id="IPR008925">
    <property type="entry name" value="aa_tRNA-synth_I_cd-bd_sf"/>
</dbReference>
<dbReference type="InterPro" id="IPR004527">
    <property type="entry name" value="Glu-tRNA-ligase_bac/mito"/>
</dbReference>
<dbReference type="InterPro" id="IPR000924">
    <property type="entry name" value="Glu/Gln-tRNA-synth"/>
</dbReference>
<dbReference type="InterPro" id="IPR020058">
    <property type="entry name" value="Glu/Gln-tRNA-synth_Ib_cat-dom"/>
</dbReference>
<dbReference type="InterPro" id="IPR049940">
    <property type="entry name" value="GluQ/Sye"/>
</dbReference>
<dbReference type="InterPro" id="IPR033910">
    <property type="entry name" value="GluRS_core"/>
</dbReference>
<dbReference type="InterPro" id="IPR014729">
    <property type="entry name" value="Rossmann-like_a/b/a_fold"/>
</dbReference>
<dbReference type="NCBIfam" id="TIGR00464">
    <property type="entry name" value="gltX_bact"/>
    <property type="match status" value="1"/>
</dbReference>
<dbReference type="NCBIfam" id="NF004314">
    <property type="entry name" value="PRK05710.1-3"/>
    <property type="match status" value="1"/>
</dbReference>
<dbReference type="PANTHER" id="PTHR43311">
    <property type="entry name" value="GLUTAMATE--TRNA LIGASE"/>
    <property type="match status" value="1"/>
</dbReference>
<dbReference type="PANTHER" id="PTHR43311:SF2">
    <property type="entry name" value="GLUTAMATE--TRNA LIGASE, MITOCHONDRIAL-RELATED"/>
    <property type="match status" value="1"/>
</dbReference>
<dbReference type="Pfam" id="PF19269">
    <property type="entry name" value="Anticodon_2"/>
    <property type="match status" value="1"/>
</dbReference>
<dbReference type="Pfam" id="PF00749">
    <property type="entry name" value="tRNA-synt_1c"/>
    <property type="match status" value="1"/>
</dbReference>
<dbReference type="PRINTS" id="PR00987">
    <property type="entry name" value="TRNASYNTHGLU"/>
</dbReference>
<dbReference type="SUPFAM" id="SSF48163">
    <property type="entry name" value="An anticodon-binding domain of class I aminoacyl-tRNA synthetases"/>
    <property type="match status" value="1"/>
</dbReference>
<dbReference type="SUPFAM" id="SSF52374">
    <property type="entry name" value="Nucleotidylyl transferase"/>
    <property type="match status" value="1"/>
</dbReference>
<dbReference type="PROSITE" id="PS00178">
    <property type="entry name" value="AA_TRNA_LIGASE_I"/>
    <property type="match status" value="1"/>
</dbReference>
<reference key="1">
    <citation type="submission" date="2008-10" db="EMBL/GenBank/DDBJ databases">
        <title>The complete genome sequence of Helicobacter pylori strain P12.</title>
        <authorList>
            <person name="Fischer W."/>
            <person name="Windhager L."/>
            <person name="Karnholz A."/>
            <person name="Zeiller M."/>
            <person name="Zimmer R."/>
            <person name="Haas R."/>
        </authorList>
    </citation>
    <scope>NUCLEOTIDE SEQUENCE [LARGE SCALE GENOMIC DNA]</scope>
    <source>
        <strain>P12</strain>
    </source>
</reference>
<evidence type="ECO:0000255" key="1">
    <source>
        <dbReference type="HAMAP-Rule" id="MF_00022"/>
    </source>
</evidence>
<feature type="chain" id="PRO_0000367685" description="Glutamate--tRNA ligase 1">
    <location>
        <begin position="1"/>
        <end position="463"/>
    </location>
</feature>
<feature type="short sequence motif" description="'HIGH' region" evidence="1">
    <location>
        <begin position="10"/>
        <end position="20"/>
    </location>
</feature>
<feature type="short sequence motif" description="'KMSKS' region" evidence="1">
    <location>
        <begin position="238"/>
        <end position="242"/>
    </location>
</feature>
<feature type="binding site" evidence="1">
    <location>
        <position position="241"/>
    </location>
    <ligand>
        <name>ATP</name>
        <dbReference type="ChEBI" id="CHEBI:30616"/>
    </ligand>
</feature>
<gene>
    <name evidence="1" type="primary">gltX1</name>
    <name type="ordered locus">HPP12_0486</name>
</gene>
<keyword id="KW-0030">Aminoacyl-tRNA synthetase</keyword>
<keyword id="KW-0067">ATP-binding</keyword>
<keyword id="KW-0963">Cytoplasm</keyword>
<keyword id="KW-0436">Ligase</keyword>
<keyword id="KW-0547">Nucleotide-binding</keyword>
<keyword id="KW-0648">Protein biosynthesis</keyword>
<organism>
    <name type="scientific">Helicobacter pylori (strain P12)</name>
    <dbReference type="NCBI Taxonomy" id="570508"/>
    <lineage>
        <taxon>Bacteria</taxon>
        <taxon>Pseudomonadati</taxon>
        <taxon>Campylobacterota</taxon>
        <taxon>Epsilonproteobacteria</taxon>
        <taxon>Campylobacterales</taxon>
        <taxon>Helicobacteraceae</taxon>
        <taxon>Helicobacter</taxon>
    </lineage>
</organism>